<accession>Q4VAA7</accession>
<accession>Q8BPM5</accession>
<accession>Q8C832</accession>
<proteinExistence type="evidence at protein level"/>
<comment type="function">
    <text evidence="1">Plays a role in the reorganization of the cytoskeleton, endocytosis and cellular vesicle trafficking via its interactions with membranes, WASL, DNM1 and DNM2. Acts both during interphase and at the end of mitotic cell divisions. Required for efficient progress through mitosis and cytokinesis. Required for normal formation of the cleavage furrow at the end of mitosis. Modulates endocytosis of cell-surface proteins, such as APP and PRNP; this then modulates the secretion of APP and PRNP peptides. Promotes membrane tubulation (in vitro). May promote the formation of macropinosomes (By similarity).</text>
</comment>
<comment type="subunit">
    <text evidence="1 7">Homodimer (via BAR domain). Interacts with ADAM15. Interacts with FASLG. Interacts (via SH3 domain) with DNM1 and DNM2. Interacts with WASL (By similarity). Interacts with FCHSD1 (via the F-BAR domain) (PubMed:26567222).</text>
</comment>
<comment type="subcellular location">
    <subcellularLocation>
        <location evidence="1">Cytoplasm</location>
        <location evidence="1">Cytosol</location>
    </subcellularLocation>
    <subcellularLocation>
        <location evidence="1">Membrane</location>
        <topology evidence="1">Peripheral membrane protein</topology>
        <orientation evidence="1">Cytoplasmic side</orientation>
    </subcellularLocation>
    <subcellularLocation>
        <location evidence="1">Cytoplasmic vesicle membrane</location>
        <topology evidence="1">Peripheral membrane protein</topology>
        <orientation evidence="1">Cytoplasmic side</orientation>
    </subcellularLocation>
    <text evidence="1">Primarily detected in the cytosol. A minor proportion is membrane-bound (By similarity).</text>
</comment>
<comment type="tissue specificity">
    <text evidence="6">Detected in brain (at protein level).</text>
</comment>
<comment type="domain">
    <text evidence="1">The PX and BAR domains mediate association with membranes and are required for membrane tubulation.</text>
</comment>
<comment type="PTM">
    <text evidence="1">Phosphorylated.</text>
</comment>
<comment type="similarity">
    <text evidence="8">Belongs to the sorting nexin family.</text>
</comment>
<sequence>MALKGRALYDFHSENKEEISIQQDEELVIFSETSLDGWLQGQNSRGETGLFPASYVEIVRPGISTNHVDYSNSPAGSLGTQGSLYSSPSMASPARSGGGSGFLSNPGSFEDDDDDDWDDWDDGCTVVEEPLAGGLGTNGHPPLNLSYPGAYPNQHMAFRPKAPLERQDSLASAKRGSVVGRNLNRFSCFVRSGVEAFILGDVPMMAKIAETYSIEMGPRGPQWKANPHPFACSIEDPTKQTKFKGIKSYISYKLTPTHAGSPVYRRYKHFDWLYNRLLHKFTVISVPHLPEKQATGRFEEDFIEKRKRRLILWMDHMTSHPVLSQYEGFQHFLSCLDDKQWKMGKRRAEKDEMVGASFLLTFQIPTEHQDLQDVEDRVDTFKAFSKKMDDSVLQLSNVAAELVRKHVGGFRKEFQKLGSAFQAISHAFQMDPPFRSDALNNAISHTGRTYETVGEMFAEQPKHDLFQMLDTLSLYQGLLSNFPDIIHLQKGAFAKVKESQRMSDEGRMAQEEADGIRRRCRVVGFALQAEMNHFHQRRELDFKHMMQSYLRQQILFYQRVGQQLEKTLHMYDHL</sequence>
<organism>
    <name type="scientific">Mus musculus</name>
    <name type="common">Mouse</name>
    <dbReference type="NCBI Taxonomy" id="10090"/>
    <lineage>
        <taxon>Eukaryota</taxon>
        <taxon>Metazoa</taxon>
        <taxon>Chordata</taxon>
        <taxon>Craniata</taxon>
        <taxon>Vertebrata</taxon>
        <taxon>Euteleostomi</taxon>
        <taxon>Mammalia</taxon>
        <taxon>Eutheria</taxon>
        <taxon>Euarchontoglires</taxon>
        <taxon>Glires</taxon>
        <taxon>Rodentia</taxon>
        <taxon>Myomorpha</taxon>
        <taxon>Muroidea</taxon>
        <taxon>Muridae</taxon>
        <taxon>Murinae</taxon>
        <taxon>Mus</taxon>
        <taxon>Mus</taxon>
    </lineage>
</organism>
<feature type="chain" id="PRO_0000311949" description="Sorting nexin-33">
    <location>
        <begin position="1"/>
        <end position="574"/>
    </location>
</feature>
<feature type="domain" description="SH3" evidence="4">
    <location>
        <begin position="1"/>
        <end position="61"/>
    </location>
</feature>
<feature type="domain" description="PX" evidence="3">
    <location>
        <begin position="230"/>
        <end position="340"/>
    </location>
</feature>
<feature type="domain" description="BAR">
    <location>
        <begin position="371"/>
        <end position="574"/>
    </location>
</feature>
<feature type="region of interest" description="Disordered" evidence="5">
    <location>
        <begin position="79"/>
        <end position="116"/>
    </location>
</feature>
<feature type="compositionally biased region" description="Polar residues" evidence="5">
    <location>
        <begin position="79"/>
        <end position="90"/>
    </location>
</feature>
<feature type="modified residue" description="Phosphoserine" evidence="2">
    <location>
        <position position="77"/>
    </location>
</feature>
<feature type="modified residue" description="Phosphoserine" evidence="2">
    <location>
        <position position="92"/>
    </location>
</feature>
<feature type="sequence conflict" description="In Ref. 1; BAC35511." evidence="8" ref="1">
    <original>D</original>
    <variation>Y</variation>
    <location>
        <position position="10"/>
    </location>
</feature>
<feature type="sequence conflict" description="In Ref. 1; BAC35511." evidence="8" ref="1">
    <original>H</original>
    <variation>N</variation>
    <location>
        <position position="316"/>
    </location>
</feature>
<feature type="sequence conflict" description="In Ref. 1; BAC33376." evidence="8" ref="1">
    <original>K</original>
    <variation>E</variation>
    <location>
        <position position="387"/>
    </location>
</feature>
<dbReference type="EMBL" id="AK048566">
    <property type="protein sequence ID" value="BAC33376.1"/>
    <property type="molecule type" value="mRNA"/>
</dbReference>
<dbReference type="EMBL" id="AK053761">
    <property type="protein sequence ID" value="BAC35511.1"/>
    <property type="molecule type" value="mRNA"/>
</dbReference>
<dbReference type="EMBL" id="AK142274">
    <property type="protein sequence ID" value="BAE25004.1"/>
    <property type="molecule type" value="mRNA"/>
</dbReference>
<dbReference type="EMBL" id="BC096472">
    <property type="protein sequence ID" value="AAH96472.1"/>
    <property type="molecule type" value="mRNA"/>
</dbReference>
<dbReference type="CCDS" id="CCDS23212.1"/>
<dbReference type="RefSeq" id="NP_780692.2">
    <property type="nucleotide sequence ID" value="NM_175483.5"/>
</dbReference>
<dbReference type="RefSeq" id="XP_006511154.1">
    <property type="nucleotide sequence ID" value="XM_006511091.3"/>
</dbReference>
<dbReference type="SMR" id="Q4VAA7"/>
<dbReference type="BioGRID" id="231655">
    <property type="interactions" value="3"/>
</dbReference>
<dbReference type="FunCoup" id="Q4VAA7">
    <property type="interactions" value="2153"/>
</dbReference>
<dbReference type="IntAct" id="Q4VAA7">
    <property type="interactions" value="1"/>
</dbReference>
<dbReference type="MINT" id="Q4VAA7"/>
<dbReference type="STRING" id="10090.ENSMUSP00000060225"/>
<dbReference type="iPTMnet" id="Q4VAA7"/>
<dbReference type="PhosphoSitePlus" id="Q4VAA7"/>
<dbReference type="jPOST" id="Q4VAA7"/>
<dbReference type="PaxDb" id="10090-ENSMUSP00000060225"/>
<dbReference type="PeptideAtlas" id="Q4VAA7"/>
<dbReference type="ProteomicsDB" id="261303"/>
<dbReference type="Pumba" id="Q4VAA7"/>
<dbReference type="Antibodypedia" id="27355">
    <property type="antibodies" value="133 antibodies from 24 providers"/>
</dbReference>
<dbReference type="DNASU" id="235406"/>
<dbReference type="Ensembl" id="ENSMUST00000050916.7">
    <property type="protein sequence ID" value="ENSMUSP00000060225.6"/>
    <property type="gene ID" value="ENSMUSG00000032733.7"/>
</dbReference>
<dbReference type="GeneID" id="235406"/>
<dbReference type="KEGG" id="mmu:235406"/>
<dbReference type="UCSC" id="uc009ptp.1">
    <property type="organism name" value="mouse"/>
</dbReference>
<dbReference type="AGR" id="MGI:2443239"/>
<dbReference type="CTD" id="257364"/>
<dbReference type="MGI" id="MGI:2443239">
    <property type="gene designation" value="Snx33"/>
</dbReference>
<dbReference type="VEuPathDB" id="HostDB:ENSMUSG00000032733"/>
<dbReference type="eggNOG" id="KOG2528">
    <property type="taxonomic scope" value="Eukaryota"/>
</dbReference>
<dbReference type="GeneTree" id="ENSGT00940000160162"/>
<dbReference type="HOGENOM" id="CLU_021494_3_0_1"/>
<dbReference type="InParanoid" id="Q4VAA7"/>
<dbReference type="OMA" id="QAFQMDP"/>
<dbReference type="OrthoDB" id="10254720at2759"/>
<dbReference type="PhylomeDB" id="Q4VAA7"/>
<dbReference type="TreeFam" id="TF314082"/>
<dbReference type="BioGRID-ORCS" id="235406">
    <property type="hits" value="3 hits in 77 CRISPR screens"/>
</dbReference>
<dbReference type="PRO" id="PR:Q4VAA7"/>
<dbReference type="Proteomes" id="UP000000589">
    <property type="component" value="Chromosome 9"/>
</dbReference>
<dbReference type="RNAct" id="Q4VAA7">
    <property type="molecule type" value="protein"/>
</dbReference>
<dbReference type="Bgee" id="ENSMUSG00000032733">
    <property type="expression patterns" value="Expressed in otolith organ and 190 other cell types or tissues"/>
</dbReference>
<dbReference type="GO" id="GO:0031410">
    <property type="term" value="C:cytoplasmic vesicle"/>
    <property type="evidence" value="ECO:0000250"/>
    <property type="project" value="UniProtKB"/>
</dbReference>
<dbReference type="GO" id="GO:0030659">
    <property type="term" value="C:cytoplasmic vesicle membrane"/>
    <property type="evidence" value="ECO:0007669"/>
    <property type="project" value="UniProtKB-SubCell"/>
</dbReference>
<dbReference type="GO" id="GO:0005829">
    <property type="term" value="C:cytosol"/>
    <property type="evidence" value="ECO:0007669"/>
    <property type="project" value="UniProtKB-SubCell"/>
</dbReference>
<dbReference type="GO" id="GO:0042802">
    <property type="term" value="F:identical protein binding"/>
    <property type="evidence" value="ECO:0007669"/>
    <property type="project" value="Ensembl"/>
</dbReference>
<dbReference type="GO" id="GO:0035091">
    <property type="term" value="F:phosphatidylinositol binding"/>
    <property type="evidence" value="ECO:0007669"/>
    <property type="project" value="InterPro"/>
</dbReference>
<dbReference type="GO" id="GO:0036089">
    <property type="term" value="P:cleavage furrow formation"/>
    <property type="evidence" value="ECO:0000250"/>
    <property type="project" value="UniProtKB"/>
</dbReference>
<dbReference type="GO" id="GO:0006897">
    <property type="term" value="P:endocytosis"/>
    <property type="evidence" value="ECO:0000250"/>
    <property type="project" value="UniProtKB"/>
</dbReference>
<dbReference type="GO" id="GO:0016197">
    <property type="term" value="P:endosomal transport"/>
    <property type="evidence" value="ECO:0000250"/>
    <property type="project" value="UniProtKB"/>
</dbReference>
<dbReference type="GO" id="GO:0007032">
    <property type="term" value="P:endosome organization"/>
    <property type="evidence" value="ECO:0000250"/>
    <property type="project" value="UniProtKB"/>
</dbReference>
<dbReference type="GO" id="GO:0006886">
    <property type="term" value="P:intracellular protein transport"/>
    <property type="evidence" value="ECO:0007669"/>
    <property type="project" value="InterPro"/>
</dbReference>
<dbReference type="GO" id="GO:0044351">
    <property type="term" value="P:macropinocytosis"/>
    <property type="evidence" value="ECO:0000250"/>
    <property type="project" value="UniProtKB"/>
</dbReference>
<dbReference type="GO" id="GO:0000281">
    <property type="term" value="P:mitotic cytokinesis"/>
    <property type="evidence" value="ECO:0000250"/>
    <property type="project" value="UniProtKB"/>
</dbReference>
<dbReference type="GO" id="GO:0045806">
    <property type="term" value="P:negative regulation of endocytosis"/>
    <property type="evidence" value="ECO:0007669"/>
    <property type="project" value="Ensembl"/>
</dbReference>
<dbReference type="GO" id="GO:2000009">
    <property type="term" value="P:negative regulation of protein localization to cell surface"/>
    <property type="evidence" value="ECO:0007669"/>
    <property type="project" value="Ensembl"/>
</dbReference>
<dbReference type="GO" id="GO:0097320">
    <property type="term" value="P:plasma membrane tubulation"/>
    <property type="evidence" value="ECO:0000250"/>
    <property type="project" value="UniProtKB"/>
</dbReference>
<dbReference type="GO" id="GO:0051044">
    <property type="term" value="P:positive regulation of membrane protein ectodomain proteolysis"/>
    <property type="evidence" value="ECO:0007669"/>
    <property type="project" value="Ensembl"/>
</dbReference>
<dbReference type="GO" id="GO:2000010">
    <property type="term" value="P:positive regulation of protein localization to cell surface"/>
    <property type="evidence" value="ECO:0007669"/>
    <property type="project" value="Ensembl"/>
</dbReference>
<dbReference type="GO" id="GO:0017038">
    <property type="term" value="P:protein import"/>
    <property type="evidence" value="ECO:0007669"/>
    <property type="project" value="Ensembl"/>
</dbReference>
<dbReference type="CDD" id="cd07669">
    <property type="entry name" value="BAR_SNX33"/>
    <property type="match status" value="1"/>
</dbReference>
<dbReference type="CDD" id="cd11896">
    <property type="entry name" value="SH3_SNX33"/>
    <property type="match status" value="1"/>
</dbReference>
<dbReference type="FunFam" id="1.20.1270.60:FF:000033">
    <property type="entry name" value="Sorting nexin"/>
    <property type="match status" value="1"/>
</dbReference>
<dbReference type="FunFam" id="2.30.30.40:FF:000116">
    <property type="entry name" value="Sorting nexin"/>
    <property type="match status" value="1"/>
</dbReference>
<dbReference type="FunFam" id="3.30.1520.10:FF:000004">
    <property type="entry name" value="Sorting nexin"/>
    <property type="match status" value="1"/>
</dbReference>
<dbReference type="Gene3D" id="1.20.1270.60">
    <property type="entry name" value="Arfaptin homology (AH) domain/BAR domain"/>
    <property type="match status" value="1"/>
</dbReference>
<dbReference type="Gene3D" id="3.30.1520.10">
    <property type="entry name" value="Phox-like domain"/>
    <property type="match status" value="1"/>
</dbReference>
<dbReference type="Gene3D" id="2.30.30.40">
    <property type="entry name" value="SH3 Domains"/>
    <property type="match status" value="1"/>
</dbReference>
<dbReference type="InterPro" id="IPR027267">
    <property type="entry name" value="AH/BAR_dom_sf"/>
</dbReference>
<dbReference type="InterPro" id="IPR001683">
    <property type="entry name" value="PX_dom"/>
</dbReference>
<dbReference type="InterPro" id="IPR036871">
    <property type="entry name" value="PX_dom_sf"/>
</dbReference>
<dbReference type="InterPro" id="IPR036028">
    <property type="entry name" value="SH3-like_dom_sf"/>
</dbReference>
<dbReference type="InterPro" id="IPR001452">
    <property type="entry name" value="SH3_domain"/>
</dbReference>
<dbReference type="InterPro" id="IPR037427">
    <property type="entry name" value="SNX33_BAR"/>
</dbReference>
<dbReference type="InterPro" id="IPR014536">
    <property type="entry name" value="Snx9_fam"/>
</dbReference>
<dbReference type="InterPro" id="IPR019497">
    <property type="entry name" value="Sorting_nexin_WASP-bd-dom"/>
</dbReference>
<dbReference type="PANTHER" id="PTHR45827">
    <property type="entry name" value="SORTING NEXIN"/>
    <property type="match status" value="1"/>
</dbReference>
<dbReference type="PANTHER" id="PTHR45827:SF3">
    <property type="entry name" value="SORTING NEXIN-33"/>
    <property type="match status" value="1"/>
</dbReference>
<dbReference type="Pfam" id="PF10456">
    <property type="entry name" value="BAR_3_WASP_bdg"/>
    <property type="match status" value="1"/>
</dbReference>
<dbReference type="Pfam" id="PF00787">
    <property type="entry name" value="PX"/>
    <property type="match status" value="1"/>
</dbReference>
<dbReference type="Pfam" id="PF14604">
    <property type="entry name" value="SH3_9"/>
    <property type="match status" value="1"/>
</dbReference>
<dbReference type="PIRSF" id="PIRSF027744">
    <property type="entry name" value="Snx9"/>
    <property type="match status" value="1"/>
</dbReference>
<dbReference type="SMART" id="SM00312">
    <property type="entry name" value="PX"/>
    <property type="match status" value="1"/>
</dbReference>
<dbReference type="SMART" id="SM00326">
    <property type="entry name" value="SH3"/>
    <property type="match status" value="1"/>
</dbReference>
<dbReference type="SUPFAM" id="SSF64268">
    <property type="entry name" value="PX domain"/>
    <property type="match status" value="1"/>
</dbReference>
<dbReference type="SUPFAM" id="SSF50044">
    <property type="entry name" value="SH3-domain"/>
    <property type="match status" value="1"/>
</dbReference>
<dbReference type="PROSITE" id="PS50195">
    <property type="entry name" value="PX"/>
    <property type="match status" value="1"/>
</dbReference>
<dbReference type="PROSITE" id="PS50002">
    <property type="entry name" value="SH3"/>
    <property type="match status" value="1"/>
</dbReference>
<keyword id="KW-0131">Cell cycle</keyword>
<keyword id="KW-0132">Cell division</keyword>
<keyword id="KW-0963">Cytoplasm</keyword>
<keyword id="KW-0968">Cytoplasmic vesicle</keyword>
<keyword id="KW-0254">Endocytosis</keyword>
<keyword id="KW-0472">Membrane</keyword>
<keyword id="KW-0498">Mitosis</keyword>
<keyword id="KW-0597">Phosphoprotein</keyword>
<keyword id="KW-0653">Protein transport</keyword>
<keyword id="KW-1185">Reference proteome</keyword>
<keyword id="KW-0728">SH3 domain</keyword>
<keyword id="KW-0813">Transport</keyword>
<evidence type="ECO:0000250" key="1"/>
<evidence type="ECO:0000250" key="2">
    <source>
        <dbReference type="UniProtKB" id="Q8WV41"/>
    </source>
</evidence>
<evidence type="ECO:0000255" key="3">
    <source>
        <dbReference type="PROSITE-ProRule" id="PRU00147"/>
    </source>
</evidence>
<evidence type="ECO:0000255" key="4">
    <source>
        <dbReference type="PROSITE-ProRule" id="PRU00192"/>
    </source>
</evidence>
<evidence type="ECO:0000256" key="5">
    <source>
        <dbReference type="SAM" id="MobiDB-lite"/>
    </source>
</evidence>
<evidence type="ECO:0000269" key="6">
    <source>
    </source>
</evidence>
<evidence type="ECO:0000269" key="7">
    <source>
    </source>
</evidence>
<evidence type="ECO:0000305" key="8"/>
<gene>
    <name type="primary">Snx33</name>
    <name type="synonym">Sh3px3</name>
</gene>
<reference key="1">
    <citation type="journal article" date="2005" name="Science">
        <title>The transcriptional landscape of the mammalian genome.</title>
        <authorList>
            <person name="Carninci P."/>
            <person name="Kasukawa T."/>
            <person name="Katayama S."/>
            <person name="Gough J."/>
            <person name="Frith M.C."/>
            <person name="Maeda N."/>
            <person name="Oyama R."/>
            <person name="Ravasi T."/>
            <person name="Lenhard B."/>
            <person name="Wells C."/>
            <person name="Kodzius R."/>
            <person name="Shimokawa K."/>
            <person name="Bajic V.B."/>
            <person name="Brenner S.E."/>
            <person name="Batalov S."/>
            <person name="Forrest A.R."/>
            <person name="Zavolan M."/>
            <person name="Davis M.J."/>
            <person name="Wilming L.G."/>
            <person name="Aidinis V."/>
            <person name="Allen J.E."/>
            <person name="Ambesi-Impiombato A."/>
            <person name="Apweiler R."/>
            <person name="Aturaliya R.N."/>
            <person name="Bailey T.L."/>
            <person name="Bansal M."/>
            <person name="Baxter L."/>
            <person name="Beisel K.W."/>
            <person name="Bersano T."/>
            <person name="Bono H."/>
            <person name="Chalk A.M."/>
            <person name="Chiu K.P."/>
            <person name="Choudhary V."/>
            <person name="Christoffels A."/>
            <person name="Clutterbuck D.R."/>
            <person name="Crowe M.L."/>
            <person name="Dalla E."/>
            <person name="Dalrymple B.P."/>
            <person name="de Bono B."/>
            <person name="Della Gatta G."/>
            <person name="di Bernardo D."/>
            <person name="Down T."/>
            <person name="Engstrom P."/>
            <person name="Fagiolini M."/>
            <person name="Faulkner G."/>
            <person name="Fletcher C.F."/>
            <person name="Fukushima T."/>
            <person name="Furuno M."/>
            <person name="Futaki S."/>
            <person name="Gariboldi M."/>
            <person name="Georgii-Hemming P."/>
            <person name="Gingeras T.R."/>
            <person name="Gojobori T."/>
            <person name="Green R.E."/>
            <person name="Gustincich S."/>
            <person name="Harbers M."/>
            <person name="Hayashi Y."/>
            <person name="Hensch T.K."/>
            <person name="Hirokawa N."/>
            <person name="Hill D."/>
            <person name="Huminiecki L."/>
            <person name="Iacono M."/>
            <person name="Ikeo K."/>
            <person name="Iwama A."/>
            <person name="Ishikawa T."/>
            <person name="Jakt M."/>
            <person name="Kanapin A."/>
            <person name="Katoh M."/>
            <person name="Kawasawa Y."/>
            <person name="Kelso J."/>
            <person name="Kitamura H."/>
            <person name="Kitano H."/>
            <person name="Kollias G."/>
            <person name="Krishnan S.P."/>
            <person name="Kruger A."/>
            <person name="Kummerfeld S.K."/>
            <person name="Kurochkin I.V."/>
            <person name="Lareau L.F."/>
            <person name="Lazarevic D."/>
            <person name="Lipovich L."/>
            <person name="Liu J."/>
            <person name="Liuni S."/>
            <person name="McWilliam S."/>
            <person name="Madan Babu M."/>
            <person name="Madera M."/>
            <person name="Marchionni L."/>
            <person name="Matsuda H."/>
            <person name="Matsuzawa S."/>
            <person name="Miki H."/>
            <person name="Mignone F."/>
            <person name="Miyake S."/>
            <person name="Morris K."/>
            <person name="Mottagui-Tabar S."/>
            <person name="Mulder N."/>
            <person name="Nakano N."/>
            <person name="Nakauchi H."/>
            <person name="Ng P."/>
            <person name="Nilsson R."/>
            <person name="Nishiguchi S."/>
            <person name="Nishikawa S."/>
            <person name="Nori F."/>
            <person name="Ohara O."/>
            <person name="Okazaki Y."/>
            <person name="Orlando V."/>
            <person name="Pang K.C."/>
            <person name="Pavan W.J."/>
            <person name="Pavesi G."/>
            <person name="Pesole G."/>
            <person name="Petrovsky N."/>
            <person name="Piazza S."/>
            <person name="Reed J."/>
            <person name="Reid J.F."/>
            <person name="Ring B.Z."/>
            <person name="Ringwald M."/>
            <person name="Rost B."/>
            <person name="Ruan Y."/>
            <person name="Salzberg S.L."/>
            <person name="Sandelin A."/>
            <person name="Schneider C."/>
            <person name="Schoenbach C."/>
            <person name="Sekiguchi K."/>
            <person name="Semple C.A."/>
            <person name="Seno S."/>
            <person name="Sessa L."/>
            <person name="Sheng Y."/>
            <person name="Shibata Y."/>
            <person name="Shimada H."/>
            <person name="Shimada K."/>
            <person name="Silva D."/>
            <person name="Sinclair B."/>
            <person name="Sperling S."/>
            <person name="Stupka E."/>
            <person name="Sugiura K."/>
            <person name="Sultana R."/>
            <person name="Takenaka Y."/>
            <person name="Taki K."/>
            <person name="Tammoja K."/>
            <person name="Tan S.L."/>
            <person name="Tang S."/>
            <person name="Taylor M.S."/>
            <person name="Tegner J."/>
            <person name="Teichmann S.A."/>
            <person name="Ueda H.R."/>
            <person name="van Nimwegen E."/>
            <person name="Verardo R."/>
            <person name="Wei C.L."/>
            <person name="Yagi K."/>
            <person name="Yamanishi H."/>
            <person name="Zabarovsky E."/>
            <person name="Zhu S."/>
            <person name="Zimmer A."/>
            <person name="Hide W."/>
            <person name="Bult C."/>
            <person name="Grimmond S.M."/>
            <person name="Teasdale R.D."/>
            <person name="Liu E.T."/>
            <person name="Brusic V."/>
            <person name="Quackenbush J."/>
            <person name="Wahlestedt C."/>
            <person name="Mattick J.S."/>
            <person name="Hume D.A."/>
            <person name="Kai C."/>
            <person name="Sasaki D."/>
            <person name="Tomaru Y."/>
            <person name="Fukuda S."/>
            <person name="Kanamori-Katayama M."/>
            <person name="Suzuki M."/>
            <person name="Aoki J."/>
            <person name="Arakawa T."/>
            <person name="Iida J."/>
            <person name="Imamura K."/>
            <person name="Itoh M."/>
            <person name="Kato T."/>
            <person name="Kawaji H."/>
            <person name="Kawagashira N."/>
            <person name="Kawashima T."/>
            <person name="Kojima M."/>
            <person name="Kondo S."/>
            <person name="Konno H."/>
            <person name="Nakano K."/>
            <person name="Ninomiya N."/>
            <person name="Nishio T."/>
            <person name="Okada M."/>
            <person name="Plessy C."/>
            <person name="Shibata K."/>
            <person name="Shiraki T."/>
            <person name="Suzuki S."/>
            <person name="Tagami M."/>
            <person name="Waki K."/>
            <person name="Watahiki A."/>
            <person name="Okamura-Oho Y."/>
            <person name="Suzuki H."/>
            <person name="Kawai J."/>
            <person name="Hayashizaki Y."/>
        </authorList>
    </citation>
    <scope>NUCLEOTIDE SEQUENCE [LARGE SCALE MRNA]</scope>
    <source>
        <strain>C57BL/6J</strain>
        <tissue>Eye</tissue>
        <tissue>Head</tissue>
        <tissue>Heart</tissue>
    </source>
</reference>
<reference key="2">
    <citation type="journal article" date="2004" name="Genome Res.">
        <title>The status, quality, and expansion of the NIH full-length cDNA project: the Mammalian Gene Collection (MGC).</title>
        <authorList>
            <consortium name="The MGC Project Team"/>
        </authorList>
    </citation>
    <scope>NUCLEOTIDE SEQUENCE [LARGE SCALE MRNA]</scope>
    <source>
        <strain>Czech II</strain>
        <tissue>Mammary tumor</tissue>
    </source>
</reference>
<reference key="3">
    <citation type="journal article" date="2008" name="J. Biol. Chem.">
        <title>A novel sorting nexin modulates endocytic trafficking and alpha-secretase cleavage of the amyloid precursor protein.</title>
        <authorList>
            <person name="Schobel S."/>
            <person name="Neumann S."/>
            <person name="Hertweck M."/>
            <person name="Dislich B."/>
            <person name="Kuhn P.H."/>
            <person name="Kremmer E."/>
            <person name="Seed B."/>
            <person name="Baumeister R."/>
            <person name="Haass C."/>
            <person name="Lichtenthaler S.F."/>
        </authorList>
    </citation>
    <scope>TISSUE SPECIFICITY</scope>
</reference>
<reference key="4">
    <citation type="journal article" date="2016" name="J. Cell Sci.">
        <title>BAR-SH3 sorting nexins are conserved interacting proteins of Nervous wreck that organize synapses and promote neurotransmission.</title>
        <authorList>
            <person name="Ukken F.P."/>
            <person name="Bruckner J.J."/>
            <person name="Weir K.L."/>
            <person name="Hope S.J."/>
            <person name="Sison S.L."/>
            <person name="Birschbach R.M."/>
            <person name="Hicks L."/>
            <person name="Taylor K.L."/>
            <person name="Dent E.W."/>
            <person name="Gonsalvez G.B."/>
            <person name="O'Connor-Giles K.M."/>
        </authorList>
    </citation>
    <scope>INTERACTION WITH FCHSD1</scope>
</reference>
<name>SNX33_MOUSE</name>
<protein>
    <recommendedName>
        <fullName>Sorting nexin-33</fullName>
    </recommendedName>
    <alternativeName>
        <fullName>SH3 and PX domain-containing protein 3</fullName>
    </alternativeName>
</protein>